<sequence length="388" mass="41412">MKHLHRFFSSDASGGIILIIAAILAMIMANSGATSGWYHDFLETPVQLRVGSLEINKNMLLWINDALMAVFFLLVGLEVKRELMQGSLASLRQAAFPVIAAIGGMIVPALLYLAFNYADPITREGWAIPAATDIAFALGVLALLGSRVPLVLKIFLMALAIIDDLGAIIIIALFYTNDLSMASLGVAAVAIAVLAVLNLCGVRRTGVYILVGVVLWTAVLKSGVHATLAGVIVGFFIPLKEKHGRSPAKRLEHVLHPWVAYLILPLFAFANAGVSLQGVTLDGLTSILPLGIIAGLLIGKPLGISLFCWLALRLKLAHLPEGTTYQQIMVVGILCGIGFTMSIFIASLAFGSVDPELINWAKLGILVGSISSAVIGYSWLRVRLRPSV</sequence>
<dbReference type="EMBL" id="AE005674">
    <property type="protein sequence ID" value="AAN41682.1"/>
    <property type="molecule type" value="Genomic_DNA"/>
</dbReference>
<dbReference type="EMBL" id="AE014073">
    <property type="protein sequence ID" value="AAP15563.1"/>
    <property type="molecule type" value="Genomic_DNA"/>
</dbReference>
<dbReference type="RefSeq" id="NP_705975.1">
    <property type="nucleotide sequence ID" value="NC_004337.2"/>
</dbReference>
<dbReference type="RefSeq" id="WP_000681363.1">
    <property type="nucleotide sequence ID" value="NZ_WPGW01000013.1"/>
</dbReference>
<dbReference type="SMR" id="Q83SR3"/>
<dbReference type="STRING" id="198214.SF0016"/>
<dbReference type="PaxDb" id="198214-SF0016"/>
<dbReference type="GeneID" id="1027500"/>
<dbReference type="KEGG" id="sfl:SF0016"/>
<dbReference type="KEGG" id="sfx:S0018"/>
<dbReference type="PATRIC" id="fig|198214.7.peg.16"/>
<dbReference type="HOGENOM" id="CLU_015803_1_0_6"/>
<dbReference type="Proteomes" id="UP000001006">
    <property type="component" value="Chromosome"/>
</dbReference>
<dbReference type="Proteomes" id="UP000002673">
    <property type="component" value="Chromosome"/>
</dbReference>
<dbReference type="GO" id="GO:0005886">
    <property type="term" value="C:plasma membrane"/>
    <property type="evidence" value="ECO:0007669"/>
    <property type="project" value="UniProtKB-SubCell"/>
</dbReference>
<dbReference type="GO" id="GO:0015385">
    <property type="term" value="F:sodium:proton antiporter activity"/>
    <property type="evidence" value="ECO:0007669"/>
    <property type="project" value="TreeGrafter"/>
</dbReference>
<dbReference type="GO" id="GO:0006885">
    <property type="term" value="P:regulation of pH"/>
    <property type="evidence" value="ECO:0007669"/>
    <property type="project" value="InterPro"/>
</dbReference>
<dbReference type="FunFam" id="1.20.1530.10:FF:000001">
    <property type="entry name" value="Na(+)/H(+) antiporter NhaA"/>
    <property type="match status" value="1"/>
</dbReference>
<dbReference type="Gene3D" id="1.20.1530.10">
    <property type="entry name" value="Na+/H+ antiporter like domain"/>
    <property type="match status" value="1"/>
</dbReference>
<dbReference type="HAMAP" id="MF_01844">
    <property type="entry name" value="NhaA"/>
    <property type="match status" value="1"/>
</dbReference>
<dbReference type="InterPro" id="IPR023171">
    <property type="entry name" value="Na/H_antiporter_dom_sf"/>
</dbReference>
<dbReference type="InterPro" id="IPR004670">
    <property type="entry name" value="NhaA"/>
</dbReference>
<dbReference type="NCBIfam" id="TIGR00773">
    <property type="entry name" value="NhaA"/>
    <property type="match status" value="1"/>
</dbReference>
<dbReference type="NCBIfam" id="NF007111">
    <property type="entry name" value="PRK09560.1"/>
    <property type="match status" value="1"/>
</dbReference>
<dbReference type="NCBIfam" id="NF007112">
    <property type="entry name" value="PRK09561.1"/>
    <property type="match status" value="1"/>
</dbReference>
<dbReference type="PANTHER" id="PTHR30341:SF0">
    <property type="entry name" value="NA(+)_H(+) ANTIPORTER NHAA"/>
    <property type="match status" value="1"/>
</dbReference>
<dbReference type="PANTHER" id="PTHR30341">
    <property type="entry name" value="SODIUM ION/PROTON ANTIPORTER NHAA-RELATED"/>
    <property type="match status" value="1"/>
</dbReference>
<dbReference type="Pfam" id="PF06965">
    <property type="entry name" value="Na_H_antiport_1"/>
    <property type="match status" value="1"/>
</dbReference>
<accession>Q83SR3</accession>
<accession>Q7C3C6</accession>
<protein>
    <recommendedName>
        <fullName evidence="1">Na(+)/H(+) antiporter NhaA</fullName>
    </recommendedName>
    <alternativeName>
        <fullName evidence="1">Sodium/proton antiporter NhaA</fullName>
    </alternativeName>
</protein>
<reference key="1">
    <citation type="journal article" date="2002" name="Nucleic Acids Res.">
        <title>Genome sequence of Shigella flexneri 2a: insights into pathogenicity through comparison with genomes of Escherichia coli K12 and O157.</title>
        <authorList>
            <person name="Jin Q."/>
            <person name="Yuan Z."/>
            <person name="Xu J."/>
            <person name="Wang Y."/>
            <person name="Shen Y."/>
            <person name="Lu W."/>
            <person name="Wang J."/>
            <person name="Liu H."/>
            <person name="Yang J."/>
            <person name="Yang F."/>
            <person name="Zhang X."/>
            <person name="Zhang J."/>
            <person name="Yang G."/>
            <person name="Wu H."/>
            <person name="Qu D."/>
            <person name="Dong J."/>
            <person name="Sun L."/>
            <person name="Xue Y."/>
            <person name="Zhao A."/>
            <person name="Gao Y."/>
            <person name="Zhu J."/>
            <person name="Kan B."/>
            <person name="Ding K."/>
            <person name="Chen S."/>
            <person name="Cheng H."/>
            <person name="Yao Z."/>
            <person name="He B."/>
            <person name="Chen R."/>
            <person name="Ma D."/>
            <person name="Qiang B."/>
            <person name="Wen Y."/>
            <person name="Hou Y."/>
            <person name="Yu J."/>
        </authorList>
    </citation>
    <scope>NUCLEOTIDE SEQUENCE [LARGE SCALE GENOMIC DNA]</scope>
    <source>
        <strain>301 / Serotype 2a</strain>
    </source>
</reference>
<reference key="2">
    <citation type="journal article" date="2003" name="Infect. Immun.">
        <title>Complete genome sequence and comparative genomics of Shigella flexneri serotype 2a strain 2457T.</title>
        <authorList>
            <person name="Wei J."/>
            <person name="Goldberg M.B."/>
            <person name="Burland V."/>
            <person name="Venkatesan M.M."/>
            <person name="Deng W."/>
            <person name="Fournier G."/>
            <person name="Mayhew G.F."/>
            <person name="Plunkett G. III"/>
            <person name="Rose D.J."/>
            <person name="Darling A."/>
            <person name="Mau B."/>
            <person name="Perna N.T."/>
            <person name="Payne S.M."/>
            <person name="Runyen-Janecky L.J."/>
            <person name="Zhou S."/>
            <person name="Schwartz D.C."/>
            <person name="Blattner F.R."/>
        </authorList>
    </citation>
    <scope>NUCLEOTIDE SEQUENCE [LARGE SCALE GENOMIC DNA]</scope>
    <source>
        <strain>ATCC 700930 / 2457T / Serotype 2a</strain>
    </source>
</reference>
<name>NHAA_SHIFL</name>
<evidence type="ECO:0000255" key="1">
    <source>
        <dbReference type="HAMAP-Rule" id="MF_01844"/>
    </source>
</evidence>
<comment type="function">
    <text evidence="1">Na(+)/H(+) antiporter that extrudes sodium in exchange for external protons.</text>
</comment>
<comment type="catalytic activity">
    <reaction evidence="1">
        <text>Na(+)(in) + 2 H(+)(out) = Na(+)(out) + 2 H(+)(in)</text>
        <dbReference type="Rhea" id="RHEA:29251"/>
        <dbReference type="ChEBI" id="CHEBI:15378"/>
        <dbReference type="ChEBI" id="CHEBI:29101"/>
    </reaction>
    <physiologicalReaction direction="left-to-right" evidence="1">
        <dbReference type="Rhea" id="RHEA:29252"/>
    </physiologicalReaction>
</comment>
<comment type="subcellular location">
    <subcellularLocation>
        <location evidence="1">Cell inner membrane</location>
        <topology evidence="1">Multi-pass membrane protein</topology>
    </subcellularLocation>
</comment>
<comment type="similarity">
    <text evidence="1">Belongs to the NhaA Na(+)/H(+) (TC 2.A.33) antiporter family.</text>
</comment>
<proteinExistence type="inferred from homology"/>
<keyword id="KW-0050">Antiport</keyword>
<keyword id="KW-0997">Cell inner membrane</keyword>
<keyword id="KW-1003">Cell membrane</keyword>
<keyword id="KW-0406">Ion transport</keyword>
<keyword id="KW-0472">Membrane</keyword>
<keyword id="KW-1185">Reference proteome</keyword>
<keyword id="KW-0915">Sodium</keyword>
<keyword id="KW-0739">Sodium transport</keyword>
<keyword id="KW-0812">Transmembrane</keyword>
<keyword id="KW-1133">Transmembrane helix</keyword>
<keyword id="KW-0813">Transport</keyword>
<gene>
    <name evidence="1" type="primary">nhaA</name>
    <name type="ordered locus">SF0016</name>
    <name type="ordered locus">S0018</name>
</gene>
<organism>
    <name type="scientific">Shigella flexneri</name>
    <dbReference type="NCBI Taxonomy" id="623"/>
    <lineage>
        <taxon>Bacteria</taxon>
        <taxon>Pseudomonadati</taxon>
        <taxon>Pseudomonadota</taxon>
        <taxon>Gammaproteobacteria</taxon>
        <taxon>Enterobacterales</taxon>
        <taxon>Enterobacteriaceae</taxon>
        <taxon>Shigella</taxon>
    </lineage>
</organism>
<feature type="chain" id="PRO_0000334437" description="Na(+)/H(+) antiporter NhaA">
    <location>
        <begin position="1"/>
        <end position="388"/>
    </location>
</feature>
<feature type="topological domain" description="Cytoplasmic" evidence="1">
    <location>
        <begin position="1"/>
        <end position="11"/>
    </location>
</feature>
<feature type="transmembrane region" description="Helical; Name=1" evidence="1">
    <location>
        <begin position="12"/>
        <end position="31"/>
    </location>
</feature>
<feature type="topological domain" description="Periplasmic" evidence="1">
    <location>
        <begin position="32"/>
        <end position="58"/>
    </location>
</feature>
<feature type="transmembrane region" description="Helical; Name=2" evidence="1">
    <location>
        <begin position="59"/>
        <end position="80"/>
    </location>
</feature>
<feature type="topological domain" description="Cytoplasmic" evidence="1">
    <location>
        <begin position="81"/>
        <end position="96"/>
    </location>
</feature>
<feature type="transmembrane region" description="Helical; Name=3" evidence="1">
    <location>
        <begin position="97"/>
        <end position="116"/>
    </location>
</feature>
<feature type="topological domain" description="Periplasmic" evidence="1">
    <location>
        <begin position="117"/>
        <end position="122"/>
    </location>
</feature>
<feature type="transmembrane region" description="Helical; Name=4" evidence="1">
    <location>
        <begin position="123"/>
        <end position="130"/>
    </location>
</feature>
<feature type="topological domain" description="Cytoplasmic" evidence="1">
    <location>
        <begin position="131"/>
        <end position="154"/>
    </location>
</feature>
<feature type="transmembrane region" description="Helical; Name=5" evidence="1">
    <location>
        <begin position="155"/>
        <end position="176"/>
    </location>
</feature>
<feature type="topological domain" description="Periplasmic" evidence="1">
    <location>
        <begin position="177"/>
        <end position="180"/>
    </location>
</feature>
<feature type="transmembrane region" description="Helical; Name=6" evidence="1">
    <location>
        <begin position="181"/>
        <end position="200"/>
    </location>
</feature>
<feature type="topological domain" description="Cytoplasmic" evidence="1">
    <location>
        <begin position="201"/>
        <end position="204"/>
    </location>
</feature>
<feature type="transmembrane region" description="Helical; Name=7" evidence="1">
    <location>
        <begin position="205"/>
        <end position="222"/>
    </location>
</feature>
<feature type="topological domain" description="Periplasmic" evidence="1">
    <location>
        <position position="223"/>
    </location>
</feature>
<feature type="transmembrane region" description="Helical; Name=8" evidence="1">
    <location>
        <begin position="224"/>
        <end position="236"/>
    </location>
</feature>
<feature type="topological domain" description="Cytoplasmic" evidence="1">
    <location>
        <begin position="237"/>
        <end position="253"/>
    </location>
</feature>
<feature type="transmembrane region" description="Helical; Name=9" evidence="1">
    <location>
        <begin position="254"/>
        <end position="272"/>
    </location>
</feature>
<feature type="topological domain" description="Periplasmic" evidence="1">
    <location>
        <begin position="273"/>
        <end position="286"/>
    </location>
</feature>
<feature type="transmembrane region" description="Helical; Name=10" evidence="1">
    <location>
        <begin position="287"/>
        <end position="310"/>
    </location>
</feature>
<feature type="topological domain" description="Cytoplasmic" evidence="1">
    <location>
        <begin position="311"/>
        <end position="339"/>
    </location>
</feature>
<feature type="transmembrane region" description="Helical; Name=11" evidence="1">
    <location>
        <begin position="340"/>
        <end position="350"/>
    </location>
</feature>
<feature type="topological domain" description="Periplasmic" evidence="1">
    <location>
        <begin position="351"/>
        <end position="357"/>
    </location>
</feature>
<feature type="transmembrane region" description="Helical; Name=12" evidence="1">
    <location>
        <begin position="358"/>
        <end position="380"/>
    </location>
</feature>
<feature type="topological domain" description="Cytoplasmic" evidence="1">
    <location>
        <begin position="381"/>
        <end position="388"/>
    </location>
</feature>